<accession>B4T9E3</accession>
<keyword id="KW-0963">Cytoplasm</keyword>
<keyword id="KW-0378">Hydrolase</keyword>
<keyword id="KW-0645">Protease</keyword>
<keyword id="KW-0720">Serine protease</keyword>
<dbReference type="EC" id="3.4.21.92" evidence="1"/>
<dbReference type="EMBL" id="CP001120">
    <property type="protein sequence ID" value="ACF69880.1"/>
    <property type="molecule type" value="Genomic_DNA"/>
</dbReference>
<dbReference type="RefSeq" id="WP_000122257.1">
    <property type="nucleotide sequence ID" value="NC_011083.1"/>
</dbReference>
<dbReference type="SMR" id="B4T9E3"/>
<dbReference type="MEROPS" id="S14.001"/>
<dbReference type="GeneID" id="66754911"/>
<dbReference type="KEGG" id="seh:SeHA_C0551"/>
<dbReference type="HOGENOM" id="CLU_058707_3_2_6"/>
<dbReference type="Proteomes" id="UP000001866">
    <property type="component" value="Chromosome"/>
</dbReference>
<dbReference type="GO" id="GO:0005737">
    <property type="term" value="C:cytoplasm"/>
    <property type="evidence" value="ECO:0007669"/>
    <property type="project" value="UniProtKB-SubCell"/>
</dbReference>
<dbReference type="GO" id="GO:0009368">
    <property type="term" value="C:endopeptidase Clp complex"/>
    <property type="evidence" value="ECO:0007669"/>
    <property type="project" value="TreeGrafter"/>
</dbReference>
<dbReference type="GO" id="GO:0004176">
    <property type="term" value="F:ATP-dependent peptidase activity"/>
    <property type="evidence" value="ECO:0007669"/>
    <property type="project" value="InterPro"/>
</dbReference>
<dbReference type="GO" id="GO:0051117">
    <property type="term" value="F:ATPase binding"/>
    <property type="evidence" value="ECO:0007669"/>
    <property type="project" value="TreeGrafter"/>
</dbReference>
<dbReference type="GO" id="GO:0004252">
    <property type="term" value="F:serine-type endopeptidase activity"/>
    <property type="evidence" value="ECO:0007669"/>
    <property type="project" value="UniProtKB-UniRule"/>
</dbReference>
<dbReference type="GO" id="GO:0006515">
    <property type="term" value="P:protein quality control for misfolded or incompletely synthesized proteins"/>
    <property type="evidence" value="ECO:0007669"/>
    <property type="project" value="TreeGrafter"/>
</dbReference>
<dbReference type="CDD" id="cd07017">
    <property type="entry name" value="S14_ClpP_2"/>
    <property type="match status" value="1"/>
</dbReference>
<dbReference type="FunFam" id="3.90.226.10:FF:000001">
    <property type="entry name" value="ATP-dependent Clp protease proteolytic subunit"/>
    <property type="match status" value="1"/>
</dbReference>
<dbReference type="Gene3D" id="3.90.226.10">
    <property type="entry name" value="2-enoyl-CoA Hydratase, Chain A, domain 1"/>
    <property type="match status" value="1"/>
</dbReference>
<dbReference type="HAMAP" id="MF_00444">
    <property type="entry name" value="ClpP"/>
    <property type="match status" value="1"/>
</dbReference>
<dbReference type="InterPro" id="IPR001907">
    <property type="entry name" value="ClpP"/>
</dbReference>
<dbReference type="InterPro" id="IPR029045">
    <property type="entry name" value="ClpP/crotonase-like_dom_sf"/>
</dbReference>
<dbReference type="InterPro" id="IPR023562">
    <property type="entry name" value="ClpP/TepA"/>
</dbReference>
<dbReference type="InterPro" id="IPR033135">
    <property type="entry name" value="ClpP_His_AS"/>
</dbReference>
<dbReference type="InterPro" id="IPR018215">
    <property type="entry name" value="ClpP_Ser_AS"/>
</dbReference>
<dbReference type="NCBIfam" id="TIGR00493">
    <property type="entry name" value="clpP"/>
    <property type="match status" value="1"/>
</dbReference>
<dbReference type="NCBIfam" id="NF001368">
    <property type="entry name" value="PRK00277.1"/>
    <property type="match status" value="1"/>
</dbReference>
<dbReference type="NCBIfam" id="NF009205">
    <property type="entry name" value="PRK12553.1"/>
    <property type="match status" value="1"/>
</dbReference>
<dbReference type="PANTHER" id="PTHR10381">
    <property type="entry name" value="ATP-DEPENDENT CLP PROTEASE PROTEOLYTIC SUBUNIT"/>
    <property type="match status" value="1"/>
</dbReference>
<dbReference type="PANTHER" id="PTHR10381:SF70">
    <property type="entry name" value="ATP-DEPENDENT CLP PROTEASE PROTEOLYTIC SUBUNIT"/>
    <property type="match status" value="1"/>
</dbReference>
<dbReference type="Pfam" id="PF00574">
    <property type="entry name" value="CLP_protease"/>
    <property type="match status" value="1"/>
</dbReference>
<dbReference type="PRINTS" id="PR00127">
    <property type="entry name" value="CLPPROTEASEP"/>
</dbReference>
<dbReference type="SUPFAM" id="SSF52096">
    <property type="entry name" value="ClpP/crotonase"/>
    <property type="match status" value="1"/>
</dbReference>
<dbReference type="PROSITE" id="PS00382">
    <property type="entry name" value="CLP_PROTEASE_HIS"/>
    <property type="match status" value="1"/>
</dbReference>
<dbReference type="PROSITE" id="PS00381">
    <property type="entry name" value="CLP_PROTEASE_SER"/>
    <property type="match status" value="1"/>
</dbReference>
<evidence type="ECO:0000255" key="1">
    <source>
        <dbReference type="HAMAP-Rule" id="MF_00444"/>
    </source>
</evidence>
<sequence>MSYSGERDNLAPHMALVPMVIEQTSRGERSFDIYSRLLKERVIFLTGQVEDHMANLIVAQMLFLEAENPEKDIYLYINSPGGVITAGMSIYDTMQFIKPDVSTICMGQAASMGAFLLTAGAKGKRFCLPNSRVMIHQPLGGYQGQATDIEIHAREILKVKGRMNELMAHHTGQSLEQIERDTERDRFLSAPEAVEYGLVDSILTHRN</sequence>
<feature type="chain" id="PRO_1000189663" description="ATP-dependent Clp protease proteolytic subunit">
    <location>
        <begin position="1"/>
        <end position="207"/>
    </location>
</feature>
<feature type="active site" description="Nucleophile" evidence="1">
    <location>
        <position position="111"/>
    </location>
</feature>
<feature type="active site" evidence="1">
    <location>
        <position position="136"/>
    </location>
</feature>
<organism>
    <name type="scientific">Salmonella heidelberg (strain SL476)</name>
    <dbReference type="NCBI Taxonomy" id="454169"/>
    <lineage>
        <taxon>Bacteria</taxon>
        <taxon>Pseudomonadati</taxon>
        <taxon>Pseudomonadota</taxon>
        <taxon>Gammaproteobacteria</taxon>
        <taxon>Enterobacterales</taxon>
        <taxon>Enterobacteriaceae</taxon>
        <taxon>Salmonella</taxon>
    </lineage>
</organism>
<gene>
    <name evidence="1" type="primary">clpP</name>
    <name type="ordered locus">SeHA_C0551</name>
</gene>
<protein>
    <recommendedName>
        <fullName evidence="1">ATP-dependent Clp protease proteolytic subunit</fullName>
        <ecNumber evidence="1">3.4.21.92</ecNumber>
    </recommendedName>
    <alternativeName>
        <fullName evidence="1">Endopeptidase Clp</fullName>
    </alternativeName>
</protein>
<reference key="1">
    <citation type="journal article" date="2011" name="J. Bacteriol.">
        <title>Comparative genomics of 28 Salmonella enterica isolates: evidence for CRISPR-mediated adaptive sublineage evolution.</title>
        <authorList>
            <person name="Fricke W.F."/>
            <person name="Mammel M.K."/>
            <person name="McDermott P.F."/>
            <person name="Tartera C."/>
            <person name="White D.G."/>
            <person name="Leclerc J.E."/>
            <person name="Ravel J."/>
            <person name="Cebula T.A."/>
        </authorList>
    </citation>
    <scope>NUCLEOTIDE SEQUENCE [LARGE SCALE GENOMIC DNA]</scope>
    <source>
        <strain>SL476</strain>
    </source>
</reference>
<proteinExistence type="inferred from homology"/>
<name>CLPP_SALHS</name>
<comment type="function">
    <text evidence="1">Cleaves peptides in various proteins in a process that requires ATP hydrolysis. Has a chymotrypsin-like activity. Plays a major role in the degradation of misfolded proteins.</text>
</comment>
<comment type="catalytic activity">
    <reaction evidence="1">
        <text>Hydrolysis of proteins to small peptides in the presence of ATP and magnesium. alpha-casein is the usual test substrate. In the absence of ATP, only oligopeptides shorter than five residues are hydrolyzed (such as succinyl-Leu-Tyr-|-NHMec, and Leu-Tyr-Leu-|-Tyr-Trp, in which cleavage of the -Tyr-|-Leu- and -Tyr-|-Trp bonds also occurs).</text>
        <dbReference type="EC" id="3.4.21.92"/>
    </reaction>
</comment>
<comment type="subunit">
    <text evidence="1">Fourteen ClpP subunits assemble into 2 heptameric rings which stack back to back to give a disk-like structure with a central cavity, resembling the structure of eukaryotic proteasomes. Component of the ClpAP and ClpXP complexes.</text>
</comment>
<comment type="subcellular location">
    <subcellularLocation>
        <location evidence="1">Cytoplasm</location>
    </subcellularLocation>
</comment>
<comment type="similarity">
    <text evidence="1">Belongs to the peptidase S14 family.</text>
</comment>